<gene>
    <name evidence="1" type="primary">prfB</name>
    <name type="ordered locus">Acel_1732</name>
</gene>
<dbReference type="EMBL" id="CP000481">
    <property type="protein sequence ID" value="ABK53504.1"/>
    <property type="molecule type" value="Genomic_DNA"/>
</dbReference>
<dbReference type="RefSeq" id="WP_011720567.1">
    <property type="nucleotide sequence ID" value="NC_008578.1"/>
</dbReference>
<dbReference type="SMR" id="A0LVP4"/>
<dbReference type="FunCoup" id="A0LVP4">
    <property type="interactions" value="178"/>
</dbReference>
<dbReference type="STRING" id="351607.Acel_1732"/>
<dbReference type="KEGG" id="ace:Acel_1732"/>
<dbReference type="eggNOG" id="COG1186">
    <property type="taxonomic scope" value="Bacteria"/>
</dbReference>
<dbReference type="HOGENOM" id="CLU_036856_6_0_11"/>
<dbReference type="InParanoid" id="A0LVP4"/>
<dbReference type="OrthoDB" id="9806673at2"/>
<dbReference type="Proteomes" id="UP000008221">
    <property type="component" value="Chromosome"/>
</dbReference>
<dbReference type="GO" id="GO:0005737">
    <property type="term" value="C:cytoplasm"/>
    <property type="evidence" value="ECO:0007669"/>
    <property type="project" value="UniProtKB-SubCell"/>
</dbReference>
<dbReference type="GO" id="GO:0016149">
    <property type="term" value="F:translation release factor activity, codon specific"/>
    <property type="evidence" value="ECO:0007669"/>
    <property type="project" value="UniProtKB-UniRule"/>
</dbReference>
<dbReference type="FunFam" id="3.30.160.20:FF:000004">
    <property type="entry name" value="Peptide chain release factor 1"/>
    <property type="match status" value="1"/>
</dbReference>
<dbReference type="Gene3D" id="3.30.160.20">
    <property type="match status" value="1"/>
</dbReference>
<dbReference type="Gene3D" id="3.30.70.1660">
    <property type="match status" value="1"/>
</dbReference>
<dbReference type="Gene3D" id="1.20.58.410">
    <property type="entry name" value="Release factor"/>
    <property type="match status" value="1"/>
</dbReference>
<dbReference type="HAMAP" id="MF_00094">
    <property type="entry name" value="Rel_fac_2"/>
    <property type="match status" value="1"/>
</dbReference>
<dbReference type="InterPro" id="IPR005139">
    <property type="entry name" value="PCRF"/>
</dbReference>
<dbReference type="InterPro" id="IPR000352">
    <property type="entry name" value="Pep_chain_release_fac_I"/>
</dbReference>
<dbReference type="InterPro" id="IPR045853">
    <property type="entry name" value="Pep_chain_release_fac_I_sf"/>
</dbReference>
<dbReference type="InterPro" id="IPR004374">
    <property type="entry name" value="PrfB"/>
</dbReference>
<dbReference type="NCBIfam" id="TIGR00020">
    <property type="entry name" value="prfB"/>
    <property type="match status" value="1"/>
</dbReference>
<dbReference type="PANTHER" id="PTHR43116:SF3">
    <property type="entry name" value="CLASS I PEPTIDE CHAIN RELEASE FACTOR"/>
    <property type="match status" value="1"/>
</dbReference>
<dbReference type="PANTHER" id="PTHR43116">
    <property type="entry name" value="PEPTIDE CHAIN RELEASE FACTOR 2"/>
    <property type="match status" value="1"/>
</dbReference>
<dbReference type="Pfam" id="PF03462">
    <property type="entry name" value="PCRF"/>
    <property type="match status" value="1"/>
</dbReference>
<dbReference type="Pfam" id="PF00472">
    <property type="entry name" value="RF-1"/>
    <property type="match status" value="1"/>
</dbReference>
<dbReference type="SMART" id="SM00937">
    <property type="entry name" value="PCRF"/>
    <property type="match status" value="1"/>
</dbReference>
<dbReference type="SUPFAM" id="SSF75620">
    <property type="entry name" value="Release factor"/>
    <property type="match status" value="1"/>
</dbReference>
<dbReference type="PROSITE" id="PS00745">
    <property type="entry name" value="RF_PROK_I"/>
    <property type="match status" value="1"/>
</dbReference>
<organism>
    <name type="scientific">Acidothermus cellulolyticus (strain ATCC 43068 / DSM 8971 / 11B)</name>
    <dbReference type="NCBI Taxonomy" id="351607"/>
    <lineage>
        <taxon>Bacteria</taxon>
        <taxon>Bacillati</taxon>
        <taxon>Actinomycetota</taxon>
        <taxon>Actinomycetes</taxon>
        <taxon>Acidothermales</taxon>
        <taxon>Acidothermaceae</taxon>
        <taxon>Acidothermus</taxon>
    </lineage>
</organism>
<reference key="1">
    <citation type="journal article" date="2009" name="Genome Res.">
        <title>Complete genome of the cellulolytic thermophile Acidothermus cellulolyticus 11B provides insights into its ecophysiological and evolutionary adaptations.</title>
        <authorList>
            <person name="Barabote R.D."/>
            <person name="Xie G."/>
            <person name="Leu D.H."/>
            <person name="Normand P."/>
            <person name="Necsulea A."/>
            <person name="Daubin V."/>
            <person name="Medigue C."/>
            <person name="Adney W.S."/>
            <person name="Xu X.C."/>
            <person name="Lapidus A."/>
            <person name="Parales R.E."/>
            <person name="Detter C."/>
            <person name="Pujic P."/>
            <person name="Bruce D."/>
            <person name="Lavire C."/>
            <person name="Challacombe J.F."/>
            <person name="Brettin T.S."/>
            <person name="Berry A.M."/>
        </authorList>
    </citation>
    <scope>NUCLEOTIDE SEQUENCE [LARGE SCALE GENOMIC DNA]</scope>
    <source>
        <strain>ATCC 43068 / DSM 8971 / 11B</strain>
    </source>
</reference>
<accession>A0LVP4</accession>
<proteinExistence type="inferred from homology"/>
<evidence type="ECO:0000255" key="1">
    <source>
        <dbReference type="HAMAP-Rule" id="MF_00094"/>
    </source>
</evidence>
<sequence length="369" mass="41612">MQPQDPHEHLKDLDTRLAGIEQVLDLPAMRREAADLERQAADPGLWNDPENAQRVTSRLSFLQAEIRRVEGLRKRLDDVMVLFELAEAENDEPTRTEALAEMAALQKAIDDLEVRTLLSGEYDAREALVTINSQAGGVDAADWAQMLLRMYLRWAERHGYPTEILDTSYAEEAGIKSATFIVHAPFTYGLLAAEHGTHRLVRISPFDNQARRQTSFAGVDVVPVVEKTDHIDIPEDEIRVDVFRSSGPGGQGVNTTDSAVRITHLPTGIVVTCQNERSQLQNRATAMMVLQARLLERRRQEEAAKLAALRGETTTSWGTQIRNYVLHPYQLVKDLRTEVETSNTAGVLDGEIDEFIDAGVRWRRQRERR</sequence>
<comment type="function">
    <text evidence="1">Peptide chain release factor 2 directs the termination of translation in response to the peptide chain termination codons UGA and UAA.</text>
</comment>
<comment type="subcellular location">
    <subcellularLocation>
        <location evidence="1">Cytoplasm</location>
    </subcellularLocation>
</comment>
<comment type="PTM">
    <text evidence="1">Methylated by PrmC. Methylation increases the termination efficiency of RF2.</text>
</comment>
<comment type="similarity">
    <text evidence="1">Belongs to the prokaryotic/mitochondrial release factor family.</text>
</comment>
<protein>
    <recommendedName>
        <fullName evidence="1">Peptide chain release factor 2</fullName>
        <shortName evidence="1">RF-2</shortName>
    </recommendedName>
</protein>
<keyword id="KW-0963">Cytoplasm</keyword>
<keyword id="KW-0488">Methylation</keyword>
<keyword id="KW-0648">Protein biosynthesis</keyword>
<keyword id="KW-1185">Reference proteome</keyword>
<feature type="chain" id="PRO_1000004969" description="Peptide chain release factor 2">
    <location>
        <begin position="1"/>
        <end position="369"/>
    </location>
</feature>
<feature type="modified residue" description="N5-methylglutamine" evidence="1">
    <location>
        <position position="251"/>
    </location>
</feature>
<name>RF2_ACIC1</name>